<evidence type="ECO:0000255" key="1">
    <source>
        <dbReference type="HAMAP-Rule" id="MF_01263"/>
    </source>
</evidence>
<organism>
    <name type="scientific">Staphylococcus aureus (strain USA300 / TCH1516)</name>
    <dbReference type="NCBI Taxonomy" id="451516"/>
    <lineage>
        <taxon>Bacteria</taxon>
        <taxon>Bacillati</taxon>
        <taxon>Bacillota</taxon>
        <taxon>Bacilli</taxon>
        <taxon>Bacillales</taxon>
        <taxon>Staphylococcaceae</taxon>
        <taxon>Staphylococcus</taxon>
    </lineage>
</organism>
<comment type="function">
    <text evidence="1">Catalyzes the addition and repair of the essential 3'-terminal CCA sequence in tRNAs without using a nucleic acid template. Adds these three nucleotides in the order of C, C, and A to the tRNA nucleotide-73, using CTP and ATP as substrates and producing inorganic pyrophosphate. tRNA 3'-terminal CCA addition is required both for tRNA processing and repair. Also involved in tRNA surveillance by mediating tandem CCA addition to generate a CCACCA at the 3' terminus of unstable tRNAs. While stable tRNAs receive only 3'-terminal CCA, unstable tRNAs are marked with CCACCA and rapidly degraded.</text>
</comment>
<comment type="catalytic activity">
    <reaction evidence="1">
        <text>a tRNA precursor + 2 CTP + ATP = a tRNA with a 3' CCA end + 3 diphosphate</text>
        <dbReference type="Rhea" id="RHEA:14433"/>
        <dbReference type="Rhea" id="RHEA-COMP:10465"/>
        <dbReference type="Rhea" id="RHEA-COMP:10468"/>
        <dbReference type="ChEBI" id="CHEBI:30616"/>
        <dbReference type="ChEBI" id="CHEBI:33019"/>
        <dbReference type="ChEBI" id="CHEBI:37563"/>
        <dbReference type="ChEBI" id="CHEBI:74896"/>
        <dbReference type="ChEBI" id="CHEBI:83071"/>
        <dbReference type="EC" id="2.7.7.72"/>
    </reaction>
</comment>
<comment type="catalytic activity">
    <reaction evidence="1">
        <text>a tRNA with a 3' CCA end + 2 CTP + ATP = a tRNA with a 3' CCACCA end + 3 diphosphate</text>
        <dbReference type="Rhea" id="RHEA:76235"/>
        <dbReference type="Rhea" id="RHEA-COMP:10468"/>
        <dbReference type="Rhea" id="RHEA-COMP:18655"/>
        <dbReference type="ChEBI" id="CHEBI:30616"/>
        <dbReference type="ChEBI" id="CHEBI:33019"/>
        <dbReference type="ChEBI" id="CHEBI:37563"/>
        <dbReference type="ChEBI" id="CHEBI:83071"/>
        <dbReference type="ChEBI" id="CHEBI:195187"/>
    </reaction>
    <physiologicalReaction direction="left-to-right" evidence="1">
        <dbReference type="Rhea" id="RHEA:76236"/>
    </physiologicalReaction>
</comment>
<comment type="cofactor">
    <cofactor evidence="1">
        <name>Mg(2+)</name>
        <dbReference type="ChEBI" id="CHEBI:18420"/>
    </cofactor>
</comment>
<comment type="subunit">
    <text evidence="1">Homodimer.</text>
</comment>
<comment type="miscellaneous">
    <text evidence="1">A single active site specifically recognizes both ATP and CTP and is responsible for their addition.</text>
</comment>
<comment type="similarity">
    <text evidence="1">Belongs to the tRNA nucleotidyltransferase/poly(A) polymerase family. Bacterial CCA-adding enzyme type 3 subfamily.</text>
</comment>
<feature type="chain" id="PRO_1000085822" description="CCA-adding enzyme">
    <location>
        <begin position="1"/>
        <end position="400"/>
    </location>
</feature>
<feature type="binding site" evidence="1">
    <location>
        <position position="28"/>
    </location>
    <ligand>
        <name>ATP</name>
        <dbReference type="ChEBI" id="CHEBI:30616"/>
    </ligand>
</feature>
<feature type="binding site" evidence="1">
    <location>
        <position position="28"/>
    </location>
    <ligand>
        <name>CTP</name>
        <dbReference type="ChEBI" id="CHEBI:37563"/>
    </ligand>
</feature>
<feature type="binding site" evidence="1">
    <location>
        <position position="31"/>
    </location>
    <ligand>
        <name>ATP</name>
        <dbReference type="ChEBI" id="CHEBI:30616"/>
    </ligand>
</feature>
<feature type="binding site" evidence="1">
    <location>
        <position position="31"/>
    </location>
    <ligand>
        <name>CTP</name>
        <dbReference type="ChEBI" id="CHEBI:37563"/>
    </ligand>
</feature>
<feature type="binding site" evidence="1">
    <location>
        <position position="41"/>
    </location>
    <ligand>
        <name>Mg(2+)</name>
        <dbReference type="ChEBI" id="CHEBI:18420"/>
    </ligand>
</feature>
<feature type="binding site" evidence="1">
    <location>
        <position position="43"/>
    </location>
    <ligand>
        <name>Mg(2+)</name>
        <dbReference type="ChEBI" id="CHEBI:18420"/>
    </ligand>
</feature>
<feature type="binding site" evidence="1">
    <location>
        <position position="112"/>
    </location>
    <ligand>
        <name>ATP</name>
        <dbReference type="ChEBI" id="CHEBI:30616"/>
    </ligand>
</feature>
<feature type="binding site" evidence="1">
    <location>
        <position position="112"/>
    </location>
    <ligand>
        <name>CTP</name>
        <dbReference type="ChEBI" id="CHEBI:37563"/>
    </ligand>
</feature>
<feature type="binding site" evidence="1">
    <location>
        <position position="155"/>
    </location>
    <ligand>
        <name>ATP</name>
        <dbReference type="ChEBI" id="CHEBI:30616"/>
    </ligand>
</feature>
<feature type="binding site" evidence="1">
    <location>
        <position position="155"/>
    </location>
    <ligand>
        <name>CTP</name>
        <dbReference type="ChEBI" id="CHEBI:37563"/>
    </ligand>
</feature>
<feature type="binding site" evidence="1">
    <location>
        <position position="158"/>
    </location>
    <ligand>
        <name>ATP</name>
        <dbReference type="ChEBI" id="CHEBI:30616"/>
    </ligand>
</feature>
<feature type="binding site" evidence="1">
    <location>
        <position position="158"/>
    </location>
    <ligand>
        <name>CTP</name>
        <dbReference type="ChEBI" id="CHEBI:37563"/>
    </ligand>
</feature>
<feature type="binding site" evidence="1">
    <location>
        <position position="161"/>
    </location>
    <ligand>
        <name>ATP</name>
        <dbReference type="ChEBI" id="CHEBI:30616"/>
    </ligand>
</feature>
<feature type="binding site" evidence="1">
    <location>
        <position position="161"/>
    </location>
    <ligand>
        <name>CTP</name>
        <dbReference type="ChEBI" id="CHEBI:37563"/>
    </ligand>
</feature>
<feature type="binding site" evidence="1">
    <location>
        <position position="164"/>
    </location>
    <ligand>
        <name>ATP</name>
        <dbReference type="ChEBI" id="CHEBI:30616"/>
    </ligand>
</feature>
<feature type="binding site" evidence="1">
    <location>
        <position position="164"/>
    </location>
    <ligand>
        <name>CTP</name>
        <dbReference type="ChEBI" id="CHEBI:37563"/>
    </ligand>
</feature>
<protein>
    <recommendedName>
        <fullName evidence="1">CCA-adding enzyme</fullName>
        <ecNumber evidence="1">2.7.7.72</ecNumber>
    </recommendedName>
    <alternativeName>
        <fullName evidence="1">CCA tRNA nucleotidyltransferase</fullName>
    </alternativeName>
    <alternativeName>
        <fullName evidence="1">tRNA CCA-pyrophosphorylase</fullName>
    </alternativeName>
    <alternativeName>
        <fullName evidence="1">tRNA adenylyl-/cytidylyl- transferase</fullName>
    </alternativeName>
    <alternativeName>
        <fullName evidence="1">tRNA nucleotidyltransferase</fullName>
    </alternativeName>
    <alternativeName>
        <fullName evidence="1">tRNA-NT</fullName>
    </alternativeName>
</protein>
<keyword id="KW-0067">ATP-binding</keyword>
<keyword id="KW-0460">Magnesium</keyword>
<keyword id="KW-0479">Metal-binding</keyword>
<keyword id="KW-0547">Nucleotide-binding</keyword>
<keyword id="KW-0548">Nucleotidyltransferase</keyword>
<keyword id="KW-0692">RNA repair</keyword>
<keyword id="KW-0694">RNA-binding</keyword>
<keyword id="KW-0808">Transferase</keyword>
<keyword id="KW-0819">tRNA processing</keyword>
<dbReference type="EC" id="2.7.7.72" evidence="1"/>
<dbReference type="EMBL" id="CP000730">
    <property type="protein sequence ID" value="ABX29405.1"/>
    <property type="molecule type" value="Genomic_DNA"/>
</dbReference>
<dbReference type="RefSeq" id="WP_000361544.1">
    <property type="nucleotide sequence ID" value="NC_010079.1"/>
</dbReference>
<dbReference type="SMR" id="A8Z437"/>
<dbReference type="KEGG" id="sax:USA300HOU_1395"/>
<dbReference type="HOGENOM" id="CLU_015961_3_0_9"/>
<dbReference type="GO" id="GO:0005524">
    <property type="term" value="F:ATP binding"/>
    <property type="evidence" value="ECO:0007669"/>
    <property type="project" value="UniProtKB-UniRule"/>
</dbReference>
<dbReference type="GO" id="GO:0004810">
    <property type="term" value="F:CCA tRNA nucleotidyltransferase activity"/>
    <property type="evidence" value="ECO:0007669"/>
    <property type="project" value="UniProtKB-UniRule"/>
</dbReference>
<dbReference type="GO" id="GO:0000287">
    <property type="term" value="F:magnesium ion binding"/>
    <property type="evidence" value="ECO:0007669"/>
    <property type="project" value="UniProtKB-UniRule"/>
</dbReference>
<dbReference type="GO" id="GO:0000049">
    <property type="term" value="F:tRNA binding"/>
    <property type="evidence" value="ECO:0007669"/>
    <property type="project" value="UniProtKB-UniRule"/>
</dbReference>
<dbReference type="GO" id="GO:0042245">
    <property type="term" value="P:RNA repair"/>
    <property type="evidence" value="ECO:0007669"/>
    <property type="project" value="UniProtKB-KW"/>
</dbReference>
<dbReference type="GO" id="GO:0001680">
    <property type="term" value="P:tRNA 3'-terminal CCA addition"/>
    <property type="evidence" value="ECO:0007669"/>
    <property type="project" value="UniProtKB-UniRule"/>
</dbReference>
<dbReference type="CDD" id="cd05398">
    <property type="entry name" value="NT_ClassII-CCAase"/>
    <property type="match status" value="1"/>
</dbReference>
<dbReference type="Gene3D" id="1.10.246.80">
    <property type="match status" value="1"/>
</dbReference>
<dbReference type="Gene3D" id="3.30.460.10">
    <property type="entry name" value="Beta Polymerase, domain 2"/>
    <property type="match status" value="1"/>
</dbReference>
<dbReference type="Gene3D" id="1.10.3090.10">
    <property type="entry name" value="cca-adding enzyme, domain 2"/>
    <property type="match status" value="1"/>
</dbReference>
<dbReference type="HAMAP" id="MF_01263">
    <property type="entry name" value="CCA_bact_type3"/>
    <property type="match status" value="1"/>
</dbReference>
<dbReference type="InterPro" id="IPR050264">
    <property type="entry name" value="Bact_CCA-adding_enz_type3_sf"/>
</dbReference>
<dbReference type="InterPro" id="IPR032810">
    <property type="entry name" value="CCA-adding_enz_C"/>
</dbReference>
<dbReference type="InterPro" id="IPR023068">
    <property type="entry name" value="CCA-adding_enz_firmicutes"/>
</dbReference>
<dbReference type="InterPro" id="IPR043519">
    <property type="entry name" value="NT_sf"/>
</dbReference>
<dbReference type="InterPro" id="IPR002646">
    <property type="entry name" value="PolA_pol_head_dom"/>
</dbReference>
<dbReference type="InterPro" id="IPR032828">
    <property type="entry name" value="PolyA_RNA-bd"/>
</dbReference>
<dbReference type="NCBIfam" id="NF009814">
    <property type="entry name" value="PRK13299.1"/>
    <property type="match status" value="1"/>
</dbReference>
<dbReference type="PANTHER" id="PTHR46173">
    <property type="entry name" value="CCA TRNA NUCLEOTIDYLTRANSFERASE 1, MITOCHONDRIAL"/>
    <property type="match status" value="1"/>
</dbReference>
<dbReference type="PANTHER" id="PTHR46173:SF1">
    <property type="entry name" value="CCA TRNA NUCLEOTIDYLTRANSFERASE 1, MITOCHONDRIAL"/>
    <property type="match status" value="1"/>
</dbReference>
<dbReference type="Pfam" id="PF01743">
    <property type="entry name" value="PolyA_pol"/>
    <property type="match status" value="1"/>
</dbReference>
<dbReference type="Pfam" id="PF12627">
    <property type="entry name" value="PolyA_pol_RNAbd"/>
    <property type="match status" value="1"/>
</dbReference>
<dbReference type="Pfam" id="PF13735">
    <property type="entry name" value="tRNA_NucTran2_2"/>
    <property type="match status" value="1"/>
</dbReference>
<dbReference type="SUPFAM" id="SSF81301">
    <property type="entry name" value="Nucleotidyltransferase"/>
    <property type="match status" value="1"/>
</dbReference>
<dbReference type="SUPFAM" id="SSF81891">
    <property type="entry name" value="Poly A polymerase C-terminal region-like"/>
    <property type="match status" value="1"/>
</dbReference>
<accession>A8Z437</accession>
<reference key="1">
    <citation type="journal article" date="2007" name="BMC Microbiol.">
        <title>Subtle genetic changes enhance virulence of methicillin resistant and sensitive Staphylococcus aureus.</title>
        <authorList>
            <person name="Highlander S.K."/>
            <person name="Hulten K.G."/>
            <person name="Qin X."/>
            <person name="Jiang H."/>
            <person name="Yerrapragada S."/>
            <person name="Mason E.O. Jr."/>
            <person name="Shang Y."/>
            <person name="Williams T.M."/>
            <person name="Fortunov R.M."/>
            <person name="Liu Y."/>
            <person name="Igboeli O."/>
            <person name="Petrosino J."/>
            <person name="Tirumalai M."/>
            <person name="Uzman A."/>
            <person name="Fox G.E."/>
            <person name="Cardenas A.M."/>
            <person name="Muzny D.M."/>
            <person name="Hemphill L."/>
            <person name="Ding Y."/>
            <person name="Dugan S."/>
            <person name="Blyth P.R."/>
            <person name="Buhay C.J."/>
            <person name="Dinh H.H."/>
            <person name="Hawes A.C."/>
            <person name="Holder M."/>
            <person name="Kovar C.L."/>
            <person name="Lee S.L."/>
            <person name="Liu W."/>
            <person name="Nazareth L.V."/>
            <person name="Wang Q."/>
            <person name="Zhou J."/>
            <person name="Kaplan S.L."/>
            <person name="Weinstock G.M."/>
        </authorList>
    </citation>
    <scope>NUCLEOTIDE SEQUENCE [LARGE SCALE GENOMIC DNA]</scope>
    <source>
        <strain>USA300 / TCH1516</strain>
    </source>
</reference>
<proteinExistence type="inferred from homology"/>
<sequence length="400" mass="46436">MDKSLFEQARPILEQIQDNGFEAYYVGGSVRDYVMGRNIHDIDITTSATPDEIESIFSHTIPVGKEHGTINVVFNDENYEVTTFRAEEDYVDHRRPSGVTFVRDLYEDLQRRDFTMNAIAMDTAYKLYDYFDGQQDINNRIIRTVGIAEERFQEDALRMIRCLRFQSQLSFDIATETFEAMRIQMADIKFLSIERIVIELTKLMRGINVEKSFNHLKSLKAFNYMPYFEHLDMNQINVTEAIDLELLIAIVSVKFDINYSLKPLKLSNRQVKDINQYIQIMNALPSIITKEQLKMFVYDYDTHLIKNVMVAADVLKANDIQGHEPLIVNLQTIDETLHRLPMHNRKDMMVNGGVLMAHLNAKSGPWLKDVLRQIEIAIVTGKVSNEETEILKWVDNHVKI</sequence>
<gene>
    <name evidence="1" type="primary">cca</name>
    <name type="ordered locus">USA300HOU_1395</name>
</gene>
<name>CCA_STAAT</name>